<proteinExistence type="inferred from homology"/>
<feature type="signal peptide" evidence="1">
    <location>
        <begin position="1"/>
        <end position="27"/>
    </location>
</feature>
<feature type="chain" id="PRO_0000269999" description="Chaperone SurA">
    <location>
        <begin position="28"/>
        <end position="439"/>
    </location>
</feature>
<feature type="domain" description="PpiC 1" evidence="1">
    <location>
        <begin position="180"/>
        <end position="281"/>
    </location>
</feature>
<feature type="domain" description="PpiC 2" evidence="1">
    <location>
        <begin position="293"/>
        <end position="391"/>
    </location>
</feature>
<keyword id="KW-0143">Chaperone</keyword>
<keyword id="KW-0413">Isomerase</keyword>
<keyword id="KW-0574">Periplasm</keyword>
<keyword id="KW-1185">Reference proteome</keyword>
<keyword id="KW-0677">Repeat</keyword>
<keyword id="KW-0697">Rotamase</keyword>
<keyword id="KW-0732">Signal</keyword>
<reference key="1">
    <citation type="journal article" date="2005" name="Arch. Microbiol.">
        <title>The genome sequence of an anaerobic aromatic-degrading denitrifying bacterium, strain EbN1.</title>
        <authorList>
            <person name="Rabus R."/>
            <person name="Kube M."/>
            <person name="Heider J."/>
            <person name="Beck A."/>
            <person name="Heitmann K."/>
            <person name="Widdel F."/>
            <person name="Reinhardt R."/>
        </authorList>
    </citation>
    <scope>NUCLEOTIDE SEQUENCE [LARGE SCALE GENOMIC DNA]</scope>
    <source>
        <strain>DSM 19018 / LMG 30748 / EbN1</strain>
    </source>
</reference>
<dbReference type="EC" id="5.2.1.8" evidence="1"/>
<dbReference type="EMBL" id="CR555306">
    <property type="protein sequence ID" value="CAI06722.1"/>
    <property type="status" value="ALT_INIT"/>
    <property type="molecule type" value="Genomic_DNA"/>
</dbReference>
<dbReference type="SMR" id="Q5P7I9"/>
<dbReference type="STRING" id="76114.ebA1140"/>
<dbReference type="KEGG" id="eba:ebA1140"/>
<dbReference type="eggNOG" id="COG0760">
    <property type="taxonomic scope" value="Bacteria"/>
</dbReference>
<dbReference type="HOGENOM" id="CLU_034646_11_0_4"/>
<dbReference type="Proteomes" id="UP000006552">
    <property type="component" value="Chromosome"/>
</dbReference>
<dbReference type="GO" id="GO:0030288">
    <property type="term" value="C:outer membrane-bounded periplasmic space"/>
    <property type="evidence" value="ECO:0007669"/>
    <property type="project" value="InterPro"/>
</dbReference>
<dbReference type="GO" id="GO:0042277">
    <property type="term" value="F:peptide binding"/>
    <property type="evidence" value="ECO:0007669"/>
    <property type="project" value="InterPro"/>
</dbReference>
<dbReference type="GO" id="GO:0003755">
    <property type="term" value="F:peptidyl-prolyl cis-trans isomerase activity"/>
    <property type="evidence" value="ECO:0007669"/>
    <property type="project" value="UniProtKB-UniRule"/>
</dbReference>
<dbReference type="GO" id="GO:0051082">
    <property type="term" value="F:unfolded protein binding"/>
    <property type="evidence" value="ECO:0007669"/>
    <property type="project" value="UniProtKB-UniRule"/>
</dbReference>
<dbReference type="GO" id="GO:0043165">
    <property type="term" value="P:Gram-negative-bacterium-type cell outer membrane assembly"/>
    <property type="evidence" value="ECO:0007669"/>
    <property type="project" value="InterPro"/>
</dbReference>
<dbReference type="GO" id="GO:0006457">
    <property type="term" value="P:protein folding"/>
    <property type="evidence" value="ECO:0007669"/>
    <property type="project" value="UniProtKB-UniRule"/>
</dbReference>
<dbReference type="GO" id="GO:0050821">
    <property type="term" value="P:protein stabilization"/>
    <property type="evidence" value="ECO:0007669"/>
    <property type="project" value="InterPro"/>
</dbReference>
<dbReference type="Gene3D" id="3.10.50.40">
    <property type="match status" value="2"/>
</dbReference>
<dbReference type="Gene3D" id="1.10.4030.10">
    <property type="entry name" value="Porin chaperone SurA, peptide-binding domain"/>
    <property type="match status" value="1"/>
</dbReference>
<dbReference type="HAMAP" id="MF_01183">
    <property type="entry name" value="Chaperone_SurA"/>
    <property type="match status" value="1"/>
</dbReference>
<dbReference type="InterPro" id="IPR050280">
    <property type="entry name" value="OMP_Chaperone_SurA"/>
</dbReference>
<dbReference type="InterPro" id="IPR046357">
    <property type="entry name" value="PPIase_dom_sf"/>
</dbReference>
<dbReference type="InterPro" id="IPR000297">
    <property type="entry name" value="PPIase_PpiC"/>
</dbReference>
<dbReference type="InterPro" id="IPR023058">
    <property type="entry name" value="PPIase_PpiC_CS"/>
</dbReference>
<dbReference type="InterPro" id="IPR023034">
    <property type="entry name" value="PPIase_SurA"/>
</dbReference>
<dbReference type="InterPro" id="IPR015391">
    <property type="entry name" value="SurA_N"/>
</dbReference>
<dbReference type="InterPro" id="IPR027304">
    <property type="entry name" value="Trigger_fact/SurA_dom_sf"/>
</dbReference>
<dbReference type="PANTHER" id="PTHR47637">
    <property type="entry name" value="CHAPERONE SURA"/>
    <property type="match status" value="1"/>
</dbReference>
<dbReference type="PANTHER" id="PTHR47637:SF1">
    <property type="entry name" value="CHAPERONE SURA"/>
    <property type="match status" value="1"/>
</dbReference>
<dbReference type="Pfam" id="PF00639">
    <property type="entry name" value="Rotamase"/>
    <property type="match status" value="1"/>
</dbReference>
<dbReference type="Pfam" id="PF13616">
    <property type="entry name" value="Rotamase_3"/>
    <property type="match status" value="1"/>
</dbReference>
<dbReference type="Pfam" id="PF09312">
    <property type="entry name" value="SurA_N"/>
    <property type="match status" value="1"/>
</dbReference>
<dbReference type="SUPFAM" id="SSF54534">
    <property type="entry name" value="FKBP-like"/>
    <property type="match status" value="2"/>
</dbReference>
<dbReference type="SUPFAM" id="SSF109998">
    <property type="entry name" value="Triger factor/SurA peptide-binding domain-like"/>
    <property type="match status" value="1"/>
</dbReference>
<dbReference type="PROSITE" id="PS01096">
    <property type="entry name" value="PPIC_PPIASE_1"/>
    <property type="match status" value="1"/>
</dbReference>
<dbReference type="PROSITE" id="PS50198">
    <property type="entry name" value="PPIC_PPIASE_2"/>
    <property type="match status" value="2"/>
</dbReference>
<comment type="function">
    <text evidence="1">Chaperone involved in the correct folding and assembly of outer membrane proteins. Recognizes specific patterns of aromatic residues and the orientation of their side chains, which are found more frequently in integral outer membrane proteins. May act in both early periplasmic and late outer membrane-associated steps of protein maturation.</text>
</comment>
<comment type="catalytic activity">
    <reaction evidence="1">
        <text>[protein]-peptidylproline (omega=180) = [protein]-peptidylproline (omega=0)</text>
        <dbReference type="Rhea" id="RHEA:16237"/>
        <dbReference type="Rhea" id="RHEA-COMP:10747"/>
        <dbReference type="Rhea" id="RHEA-COMP:10748"/>
        <dbReference type="ChEBI" id="CHEBI:83833"/>
        <dbReference type="ChEBI" id="CHEBI:83834"/>
        <dbReference type="EC" id="5.2.1.8"/>
    </reaction>
</comment>
<comment type="subcellular location">
    <subcellularLocation>
        <location evidence="1">Periplasm</location>
    </subcellularLocation>
    <text evidence="1">Is capable of associating with the outer membrane.</text>
</comment>
<comment type="domain">
    <text evidence="1">The PPIase activity resides only in the second parvulin domain. The N-terminal region and the C-terminal tail are necessary and sufficient for the chaperone activity of SurA. The PPIase activity is dispensable for SurA to function as a chaperone. The N-terminal region and the C-terminal tail are also required for porin recognition.</text>
</comment>
<comment type="sequence caution" evidence="2">
    <conflict type="erroneous initiation">
        <sequence resource="EMBL-CDS" id="CAI06722"/>
    </conflict>
</comment>
<gene>
    <name evidence="1" type="primary">surA</name>
    <name type="ordered locus">AZOSEA06000</name>
    <name type="ORF">ebA1140</name>
</gene>
<protein>
    <recommendedName>
        <fullName evidence="1">Chaperone SurA</fullName>
    </recommendedName>
    <alternativeName>
        <fullName evidence="1">Peptidyl-prolyl cis-trans isomerase SurA</fullName>
        <shortName evidence="1">PPIase SurA</shortName>
        <ecNumber evidence="1">5.2.1.8</ecNumber>
    </alternativeName>
    <alternativeName>
        <fullName evidence="1">Rotamase SurA</fullName>
    </alternativeName>
</protein>
<sequence length="439" mass="48771">MRRISSRLSLVLFAALSCATALFPAHAANPRSVEVDHIAAVVNNEVITARELRERVEQAIHQLNRQGTPQPPADVLERQLLERLVLERAQLQLARETSLQVDEATLERAIARIAESNRLTIAQLQAALEKDGVSWSRFRDNIRTEILLTRLREREVDNRIVVTDAEVDNFLANNADALSGEEFELAHILIRVPEAATQQQMAGLVARAETAKQRLNSGDDFARVAASYSDAPDAMNGGALGWRSRDRLPPLFAEAVRELSPGSVSPVLRSSAGLHIVKLLDRRGGAAAGPQQLEQTRARHILIRTSEILNDSEAESRLLGLRERVVNGASFAELAKAHSADLSSAKGGDLGWLSPGDTVPEFERTMNALKPGEVSAPVRSPFGWHLIQVEARRLQDVSDERKRNAARNALRERKADEAFEDWLRQLRDRTYVEYRTGKE</sequence>
<evidence type="ECO:0000255" key="1">
    <source>
        <dbReference type="HAMAP-Rule" id="MF_01183"/>
    </source>
</evidence>
<evidence type="ECO:0000305" key="2"/>
<name>SURA_AROAE</name>
<accession>Q5P7I9</accession>
<organism>
    <name type="scientific">Aromatoleum aromaticum (strain DSM 19018 / LMG 30748 / EbN1)</name>
    <name type="common">Azoarcus sp. (strain EbN1)</name>
    <dbReference type="NCBI Taxonomy" id="76114"/>
    <lineage>
        <taxon>Bacteria</taxon>
        <taxon>Pseudomonadati</taxon>
        <taxon>Pseudomonadota</taxon>
        <taxon>Betaproteobacteria</taxon>
        <taxon>Rhodocyclales</taxon>
        <taxon>Rhodocyclaceae</taxon>
        <taxon>Aromatoleum</taxon>
    </lineage>
</organism>